<organism>
    <name type="scientific">Delftia acidovorans (strain DSM 14801 / SPH-1)</name>
    <dbReference type="NCBI Taxonomy" id="398578"/>
    <lineage>
        <taxon>Bacteria</taxon>
        <taxon>Pseudomonadati</taxon>
        <taxon>Pseudomonadota</taxon>
        <taxon>Betaproteobacteria</taxon>
        <taxon>Burkholderiales</taxon>
        <taxon>Comamonadaceae</taxon>
        <taxon>Delftia</taxon>
    </lineage>
</organism>
<dbReference type="EC" id="2.7.4.6" evidence="1"/>
<dbReference type="EMBL" id="CP000884">
    <property type="protein sequence ID" value="ABX37652.1"/>
    <property type="molecule type" value="Genomic_DNA"/>
</dbReference>
<dbReference type="RefSeq" id="WP_012206822.1">
    <property type="nucleotide sequence ID" value="NC_010002.1"/>
</dbReference>
<dbReference type="SMR" id="A9BMV7"/>
<dbReference type="STRING" id="398578.Daci_5023"/>
<dbReference type="GeneID" id="24119353"/>
<dbReference type="KEGG" id="dac:Daci_5023"/>
<dbReference type="eggNOG" id="COG0105">
    <property type="taxonomic scope" value="Bacteria"/>
</dbReference>
<dbReference type="HOGENOM" id="CLU_060216_8_1_4"/>
<dbReference type="Proteomes" id="UP000000784">
    <property type="component" value="Chromosome"/>
</dbReference>
<dbReference type="GO" id="GO:0005737">
    <property type="term" value="C:cytoplasm"/>
    <property type="evidence" value="ECO:0007669"/>
    <property type="project" value="UniProtKB-SubCell"/>
</dbReference>
<dbReference type="GO" id="GO:0005524">
    <property type="term" value="F:ATP binding"/>
    <property type="evidence" value="ECO:0007669"/>
    <property type="project" value="UniProtKB-UniRule"/>
</dbReference>
<dbReference type="GO" id="GO:0046872">
    <property type="term" value="F:metal ion binding"/>
    <property type="evidence" value="ECO:0007669"/>
    <property type="project" value="UniProtKB-KW"/>
</dbReference>
<dbReference type="GO" id="GO:0004550">
    <property type="term" value="F:nucleoside diphosphate kinase activity"/>
    <property type="evidence" value="ECO:0007669"/>
    <property type="project" value="UniProtKB-UniRule"/>
</dbReference>
<dbReference type="GO" id="GO:0006241">
    <property type="term" value="P:CTP biosynthetic process"/>
    <property type="evidence" value="ECO:0007669"/>
    <property type="project" value="UniProtKB-UniRule"/>
</dbReference>
<dbReference type="GO" id="GO:0006183">
    <property type="term" value="P:GTP biosynthetic process"/>
    <property type="evidence" value="ECO:0007669"/>
    <property type="project" value="UniProtKB-UniRule"/>
</dbReference>
<dbReference type="GO" id="GO:0006228">
    <property type="term" value="P:UTP biosynthetic process"/>
    <property type="evidence" value="ECO:0007669"/>
    <property type="project" value="UniProtKB-UniRule"/>
</dbReference>
<dbReference type="CDD" id="cd04413">
    <property type="entry name" value="NDPk_I"/>
    <property type="match status" value="1"/>
</dbReference>
<dbReference type="FunFam" id="3.30.70.141:FF:000001">
    <property type="entry name" value="Nucleoside diphosphate kinase"/>
    <property type="match status" value="1"/>
</dbReference>
<dbReference type="Gene3D" id="3.30.70.141">
    <property type="entry name" value="Nucleoside diphosphate kinase-like domain"/>
    <property type="match status" value="1"/>
</dbReference>
<dbReference type="HAMAP" id="MF_00451">
    <property type="entry name" value="NDP_kinase"/>
    <property type="match status" value="1"/>
</dbReference>
<dbReference type="InterPro" id="IPR034907">
    <property type="entry name" value="NDK-like_dom"/>
</dbReference>
<dbReference type="InterPro" id="IPR036850">
    <property type="entry name" value="NDK-like_dom_sf"/>
</dbReference>
<dbReference type="InterPro" id="IPR001564">
    <property type="entry name" value="Nucleoside_diP_kinase"/>
</dbReference>
<dbReference type="NCBIfam" id="NF001908">
    <property type="entry name" value="PRK00668.1"/>
    <property type="match status" value="1"/>
</dbReference>
<dbReference type="PANTHER" id="PTHR46161">
    <property type="entry name" value="NUCLEOSIDE DIPHOSPHATE KINASE"/>
    <property type="match status" value="1"/>
</dbReference>
<dbReference type="PANTHER" id="PTHR46161:SF3">
    <property type="entry name" value="NUCLEOSIDE DIPHOSPHATE KINASE DDB_G0292928-RELATED"/>
    <property type="match status" value="1"/>
</dbReference>
<dbReference type="Pfam" id="PF00334">
    <property type="entry name" value="NDK"/>
    <property type="match status" value="1"/>
</dbReference>
<dbReference type="PRINTS" id="PR01243">
    <property type="entry name" value="NUCDPKINASE"/>
</dbReference>
<dbReference type="SMART" id="SM00562">
    <property type="entry name" value="NDK"/>
    <property type="match status" value="1"/>
</dbReference>
<dbReference type="SUPFAM" id="SSF54919">
    <property type="entry name" value="Nucleoside diphosphate kinase, NDK"/>
    <property type="match status" value="1"/>
</dbReference>
<dbReference type="PROSITE" id="PS51374">
    <property type="entry name" value="NDPK_LIKE"/>
    <property type="match status" value="1"/>
</dbReference>
<sequence length="141" mass="15348">MAIERTLSIIKPDAVAKNVIGQIYARFEGAGLKVIAAKMVHLSRGEAEQFYGVHKERPFFKDLVDFMVSGPVMIQALEGENAILKNRELMGATDPKKAEKGTIRADFADSIDANAVHGSDAAETAAVEVAFFFPGMNVYSR</sequence>
<reference key="1">
    <citation type="submission" date="2007-11" db="EMBL/GenBank/DDBJ databases">
        <title>Complete sequence of Delftia acidovorans DSM 14801 / SPH-1.</title>
        <authorList>
            <person name="Copeland A."/>
            <person name="Lucas S."/>
            <person name="Lapidus A."/>
            <person name="Barry K."/>
            <person name="Glavina del Rio T."/>
            <person name="Dalin E."/>
            <person name="Tice H."/>
            <person name="Pitluck S."/>
            <person name="Lowry S."/>
            <person name="Clum A."/>
            <person name="Schmutz J."/>
            <person name="Larimer F."/>
            <person name="Land M."/>
            <person name="Hauser L."/>
            <person name="Kyrpides N."/>
            <person name="Kim E."/>
            <person name="Schleheck D."/>
            <person name="Richardson P."/>
        </authorList>
    </citation>
    <scope>NUCLEOTIDE SEQUENCE [LARGE SCALE GENOMIC DNA]</scope>
    <source>
        <strain>DSM 14801 / SPH-1</strain>
    </source>
</reference>
<name>NDK_DELAS</name>
<gene>
    <name evidence="1" type="primary">ndk</name>
    <name type="ordered locus">Daci_5023</name>
</gene>
<feature type="chain" id="PRO_1000124953" description="Nucleoside diphosphate kinase">
    <location>
        <begin position="1"/>
        <end position="141"/>
    </location>
</feature>
<feature type="active site" description="Pros-phosphohistidine intermediate" evidence="1">
    <location>
        <position position="117"/>
    </location>
</feature>
<feature type="binding site" evidence="1">
    <location>
        <position position="11"/>
    </location>
    <ligand>
        <name>ATP</name>
        <dbReference type="ChEBI" id="CHEBI:30616"/>
    </ligand>
</feature>
<feature type="binding site" evidence="1">
    <location>
        <position position="59"/>
    </location>
    <ligand>
        <name>ATP</name>
        <dbReference type="ChEBI" id="CHEBI:30616"/>
    </ligand>
</feature>
<feature type="binding site" evidence="1">
    <location>
        <position position="87"/>
    </location>
    <ligand>
        <name>ATP</name>
        <dbReference type="ChEBI" id="CHEBI:30616"/>
    </ligand>
</feature>
<feature type="binding site" evidence="1">
    <location>
        <position position="93"/>
    </location>
    <ligand>
        <name>ATP</name>
        <dbReference type="ChEBI" id="CHEBI:30616"/>
    </ligand>
</feature>
<feature type="binding site" evidence="1">
    <location>
        <position position="104"/>
    </location>
    <ligand>
        <name>ATP</name>
        <dbReference type="ChEBI" id="CHEBI:30616"/>
    </ligand>
</feature>
<feature type="binding site" evidence="1">
    <location>
        <position position="114"/>
    </location>
    <ligand>
        <name>ATP</name>
        <dbReference type="ChEBI" id="CHEBI:30616"/>
    </ligand>
</feature>
<evidence type="ECO:0000255" key="1">
    <source>
        <dbReference type="HAMAP-Rule" id="MF_00451"/>
    </source>
</evidence>
<keyword id="KW-0067">ATP-binding</keyword>
<keyword id="KW-0963">Cytoplasm</keyword>
<keyword id="KW-0418">Kinase</keyword>
<keyword id="KW-0460">Magnesium</keyword>
<keyword id="KW-0479">Metal-binding</keyword>
<keyword id="KW-0546">Nucleotide metabolism</keyword>
<keyword id="KW-0547">Nucleotide-binding</keyword>
<keyword id="KW-0597">Phosphoprotein</keyword>
<keyword id="KW-1185">Reference proteome</keyword>
<keyword id="KW-0808">Transferase</keyword>
<accession>A9BMV7</accession>
<protein>
    <recommendedName>
        <fullName evidence="1">Nucleoside diphosphate kinase</fullName>
        <shortName evidence="1">NDK</shortName>
        <shortName evidence="1">NDP kinase</shortName>
        <ecNumber evidence="1">2.7.4.6</ecNumber>
    </recommendedName>
    <alternativeName>
        <fullName evidence="1">Nucleoside-2-P kinase</fullName>
    </alternativeName>
</protein>
<comment type="function">
    <text evidence="1">Major role in the synthesis of nucleoside triphosphates other than ATP. The ATP gamma phosphate is transferred to the NDP beta phosphate via a ping-pong mechanism, using a phosphorylated active-site intermediate.</text>
</comment>
<comment type="catalytic activity">
    <reaction evidence="1">
        <text>a 2'-deoxyribonucleoside 5'-diphosphate + ATP = a 2'-deoxyribonucleoside 5'-triphosphate + ADP</text>
        <dbReference type="Rhea" id="RHEA:44640"/>
        <dbReference type="ChEBI" id="CHEBI:30616"/>
        <dbReference type="ChEBI" id="CHEBI:61560"/>
        <dbReference type="ChEBI" id="CHEBI:73316"/>
        <dbReference type="ChEBI" id="CHEBI:456216"/>
        <dbReference type="EC" id="2.7.4.6"/>
    </reaction>
</comment>
<comment type="catalytic activity">
    <reaction evidence="1">
        <text>a ribonucleoside 5'-diphosphate + ATP = a ribonucleoside 5'-triphosphate + ADP</text>
        <dbReference type="Rhea" id="RHEA:18113"/>
        <dbReference type="ChEBI" id="CHEBI:30616"/>
        <dbReference type="ChEBI" id="CHEBI:57930"/>
        <dbReference type="ChEBI" id="CHEBI:61557"/>
        <dbReference type="ChEBI" id="CHEBI:456216"/>
        <dbReference type="EC" id="2.7.4.6"/>
    </reaction>
</comment>
<comment type="cofactor">
    <cofactor evidence="1">
        <name>Mg(2+)</name>
        <dbReference type="ChEBI" id="CHEBI:18420"/>
    </cofactor>
</comment>
<comment type="subunit">
    <text evidence="1">Homotetramer.</text>
</comment>
<comment type="subcellular location">
    <subcellularLocation>
        <location evidence="1">Cytoplasm</location>
    </subcellularLocation>
</comment>
<comment type="similarity">
    <text evidence="1">Belongs to the NDK family.</text>
</comment>
<proteinExistence type="inferred from homology"/>